<feature type="chain" id="PRO_1000194939" description="Ribosome-recycling factor">
    <location>
        <begin position="1"/>
        <end position="187"/>
    </location>
</feature>
<evidence type="ECO:0000255" key="1">
    <source>
        <dbReference type="HAMAP-Rule" id="MF_00040"/>
    </source>
</evidence>
<proteinExistence type="inferred from homology"/>
<organism>
    <name type="scientific">Methylobacterium nodulans (strain LMG 21967 / CNCM I-2342 / ORS 2060)</name>
    <dbReference type="NCBI Taxonomy" id="460265"/>
    <lineage>
        <taxon>Bacteria</taxon>
        <taxon>Pseudomonadati</taxon>
        <taxon>Pseudomonadota</taxon>
        <taxon>Alphaproteobacteria</taxon>
        <taxon>Hyphomicrobiales</taxon>
        <taxon>Methylobacteriaceae</taxon>
        <taxon>Methylobacterium</taxon>
    </lineage>
</organism>
<protein>
    <recommendedName>
        <fullName evidence="1">Ribosome-recycling factor</fullName>
        <shortName evidence="1">RRF</shortName>
    </recommendedName>
    <alternativeName>
        <fullName evidence="1">Ribosome-releasing factor</fullName>
    </alternativeName>
</protein>
<sequence>MATPTFDLADLKRRMQGAVNALKHDLGSLRTGRASPTLLDPIQIEAYGAVMPMAQVATISVPEPRLLSVAVWDRGMVSAVEKAIRESDLGLNPMTEGQTIRLRIPEMSEQRRKEMVKVAHKYAEEARVAVRHVRRDGLDLLKKLEKDGAISQDDEKRQADQVQKITDQHIAEVDQTLAAKEKEIMQV</sequence>
<gene>
    <name evidence="1" type="primary">frr</name>
    <name type="ordered locus">Mnod_1537</name>
</gene>
<comment type="function">
    <text evidence="1">Responsible for the release of ribosomes from messenger RNA at the termination of protein biosynthesis. May increase the efficiency of translation by recycling ribosomes from one round of translation to another.</text>
</comment>
<comment type="subcellular location">
    <subcellularLocation>
        <location evidence="1">Cytoplasm</location>
    </subcellularLocation>
</comment>
<comment type="similarity">
    <text evidence="1">Belongs to the RRF family.</text>
</comment>
<keyword id="KW-0963">Cytoplasm</keyword>
<keyword id="KW-0648">Protein biosynthesis</keyword>
<keyword id="KW-1185">Reference proteome</keyword>
<accession>B8INK3</accession>
<reference key="1">
    <citation type="submission" date="2009-01" db="EMBL/GenBank/DDBJ databases">
        <title>Complete sequence of chromosome of Methylobacterium nodulans ORS 2060.</title>
        <authorList>
            <consortium name="US DOE Joint Genome Institute"/>
            <person name="Lucas S."/>
            <person name="Copeland A."/>
            <person name="Lapidus A."/>
            <person name="Glavina del Rio T."/>
            <person name="Dalin E."/>
            <person name="Tice H."/>
            <person name="Bruce D."/>
            <person name="Goodwin L."/>
            <person name="Pitluck S."/>
            <person name="Sims D."/>
            <person name="Brettin T."/>
            <person name="Detter J.C."/>
            <person name="Han C."/>
            <person name="Larimer F."/>
            <person name="Land M."/>
            <person name="Hauser L."/>
            <person name="Kyrpides N."/>
            <person name="Ivanova N."/>
            <person name="Marx C.J."/>
            <person name="Richardson P."/>
        </authorList>
    </citation>
    <scope>NUCLEOTIDE SEQUENCE [LARGE SCALE GENOMIC DNA]</scope>
    <source>
        <strain>LMG 21967 / CNCM I-2342 / ORS 2060</strain>
    </source>
</reference>
<dbReference type="EMBL" id="CP001349">
    <property type="protein sequence ID" value="ACL56529.1"/>
    <property type="molecule type" value="Genomic_DNA"/>
</dbReference>
<dbReference type="RefSeq" id="WP_015928224.1">
    <property type="nucleotide sequence ID" value="NC_011894.1"/>
</dbReference>
<dbReference type="SMR" id="B8INK3"/>
<dbReference type="STRING" id="460265.Mnod_1537"/>
<dbReference type="KEGG" id="mno:Mnod_1537"/>
<dbReference type="eggNOG" id="COG0233">
    <property type="taxonomic scope" value="Bacteria"/>
</dbReference>
<dbReference type="HOGENOM" id="CLU_073981_2_0_5"/>
<dbReference type="OrthoDB" id="9804006at2"/>
<dbReference type="Proteomes" id="UP000008207">
    <property type="component" value="Chromosome"/>
</dbReference>
<dbReference type="GO" id="GO:0005829">
    <property type="term" value="C:cytosol"/>
    <property type="evidence" value="ECO:0007669"/>
    <property type="project" value="GOC"/>
</dbReference>
<dbReference type="GO" id="GO:0043023">
    <property type="term" value="F:ribosomal large subunit binding"/>
    <property type="evidence" value="ECO:0007669"/>
    <property type="project" value="TreeGrafter"/>
</dbReference>
<dbReference type="GO" id="GO:0002184">
    <property type="term" value="P:cytoplasmic translational termination"/>
    <property type="evidence" value="ECO:0007669"/>
    <property type="project" value="TreeGrafter"/>
</dbReference>
<dbReference type="CDD" id="cd00520">
    <property type="entry name" value="RRF"/>
    <property type="match status" value="1"/>
</dbReference>
<dbReference type="FunFam" id="1.10.132.20:FF:000001">
    <property type="entry name" value="Ribosome-recycling factor"/>
    <property type="match status" value="1"/>
</dbReference>
<dbReference type="FunFam" id="3.30.1360.40:FF:000001">
    <property type="entry name" value="Ribosome-recycling factor"/>
    <property type="match status" value="1"/>
</dbReference>
<dbReference type="Gene3D" id="3.30.1360.40">
    <property type="match status" value="1"/>
</dbReference>
<dbReference type="Gene3D" id="1.10.132.20">
    <property type="entry name" value="Ribosome-recycling factor"/>
    <property type="match status" value="1"/>
</dbReference>
<dbReference type="HAMAP" id="MF_00040">
    <property type="entry name" value="RRF"/>
    <property type="match status" value="1"/>
</dbReference>
<dbReference type="InterPro" id="IPR002661">
    <property type="entry name" value="Ribosome_recyc_fac"/>
</dbReference>
<dbReference type="InterPro" id="IPR023584">
    <property type="entry name" value="Ribosome_recyc_fac_dom"/>
</dbReference>
<dbReference type="InterPro" id="IPR036191">
    <property type="entry name" value="RRF_sf"/>
</dbReference>
<dbReference type="NCBIfam" id="TIGR00496">
    <property type="entry name" value="frr"/>
    <property type="match status" value="1"/>
</dbReference>
<dbReference type="PANTHER" id="PTHR20982:SF3">
    <property type="entry name" value="MITOCHONDRIAL RIBOSOME RECYCLING FACTOR PSEUDO 1"/>
    <property type="match status" value="1"/>
</dbReference>
<dbReference type="PANTHER" id="PTHR20982">
    <property type="entry name" value="RIBOSOME RECYCLING FACTOR"/>
    <property type="match status" value="1"/>
</dbReference>
<dbReference type="Pfam" id="PF01765">
    <property type="entry name" value="RRF"/>
    <property type="match status" value="1"/>
</dbReference>
<dbReference type="SUPFAM" id="SSF55194">
    <property type="entry name" value="Ribosome recycling factor, RRF"/>
    <property type="match status" value="1"/>
</dbReference>
<name>RRF_METNO</name>